<name>TA2R2_HUMAN</name>
<evidence type="ECO:0000255" key="1"/>
<evidence type="ECO:0000269" key="2">
    <source>
    </source>
</evidence>
<evidence type="ECO:0000269" key="3">
    <source>
    </source>
</evidence>
<evidence type="ECO:0000269" key="4">
    <source>
    </source>
</evidence>
<evidence type="ECO:0000303" key="5">
    <source>
    </source>
</evidence>
<evidence type="ECO:0000305" key="6"/>
<evidence type="ECO:0000312" key="7">
    <source>
        <dbReference type="HGNC" id="HGNC:20615"/>
    </source>
</evidence>
<proteinExistence type="inferred from homology"/>
<comment type="function">
    <text evidence="3 4">Bitter taste receptor that detects natural and synthetic bitter compounds.</text>
</comment>
<comment type="subcellular location">
    <subcellularLocation>
        <location evidence="3">Cell membrane</location>
        <topology evidence="1">Multi-pass membrane protein</topology>
    </subcellularLocation>
</comment>
<comment type="polymorphism">
    <text evidence="2">The sequence shown in this entry differs from the translation of the reference genome assembly (GRCh38/hg38) due to two-base deletion in the reference genome. An intact form of this gene still found in some human populations, such as Adygei (from Eastern Europe), Biaka, and Mbuti Pygmies (both from Africa).</text>
</comment>
<comment type="similarity">
    <text evidence="6">Belongs to the G-protein coupled receptor T2R family.</text>
</comment>
<comment type="caution">
    <text evidence="2">The sequence shown in this entry differs from the translation of the reference genome assembly (GRCh38/hg38) due to two-base deletion producing a frameshift and a premature stop codon in the reference genome.</text>
</comment>
<reference key="1">
    <citation type="journal article" date="2003" name="Nature">
        <title>The DNA sequence of human chromosome 7.</title>
        <authorList>
            <person name="Hillier L.W."/>
            <person name="Fulton R.S."/>
            <person name="Fulton L.A."/>
            <person name="Graves T.A."/>
            <person name="Pepin K.H."/>
            <person name="Wagner-McPherson C."/>
            <person name="Layman D."/>
            <person name="Maas J."/>
            <person name="Jaeger S."/>
            <person name="Walker R."/>
            <person name="Wylie K."/>
            <person name="Sekhon M."/>
            <person name="Becker M.C."/>
            <person name="O'Laughlin M.D."/>
            <person name="Schaller M.E."/>
            <person name="Fewell G.A."/>
            <person name="Delehaunty K.D."/>
            <person name="Miner T.L."/>
            <person name="Nash W.E."/>
            <person name="Cordes M."/>
            <person name="Du H."/>
            <person name="Sun H."/>
            <person name="Edwards J."/>
            <person name="Bradshaw-Cordum H."/>
            <person name="Ali J."/>
            <person name="Andrews S."/>
            <person name="Isak A."/>
            <person name="Vanbrunt A."/>
            <person name="Nguyen C."/>
            <person name="Du F."/>
            <person name="Lamar B."/>
            <person name="Courtney L."/>
            <person name="Kalicki J."/>
            <person name="Ozersky P."/>
            <person name="Bielicki L."/>
            <person name="Scott K."/>
            <person name="Holmes A."/>
            <person name="Harkins R."/>
            <person name="Harris A."/>
            <person name="Strong C.M."/>
            <person name="Hou S."/>
            <person name="Tomlinson C."/>
            <person name="Dauphin-Kohlberg S."/>
            <person name="Kozlowicz-Reilly A."/>
            <person name="Leonard S."/>
            <person name="Rohlfing T."/>
            <person name="Rock S.M."/>
            <person name="Tin-Wollam A.-M."/>
            <person name="Abbott A."/>
            <person name="Minx P."/>
            <person name="Maupin R."/>
            <person name="Strowmatt C."/>
            <person name="Latreille P."/>
            <person name="Miller N."/>
            <person name="Johnson D."/>
            <person name="Murray J."/>
            <person name="Woessner J.P."/>
            <person name="Wendl M.C."/>
            <person name="Yang S.-P."/>
            <person name="Schultz B.R."/>
            <person name="Wallis J.W."/>
            <person name="Spieth J."/>
            <person name="Bieri T.A."/>
            <person name="Nelson J.O."/>
            <person name="Berkowicz N."/>
            <person name="Wohldmann P.E."/>
            <person name="Cook L.L."/>
            <person name="Hickenbotham M.T."/>
            <person name="Eldred J."/>
            <person name="Williams D."/>
            <person name="Bedell J.A."/>
            <person name="Mardis E.R."/>
            <person name="Clifton S.W."/>
            <person name="Chissoe S.L."/>
            <person name="Marra M.A."/>
            <person name="Raymond C."/>
            <person name="Haugen E."/>
            <person name="Gillett W."/>
            <person name="Zhou Y."/>
            <person name="James R."/>
            <person name="Phelps K."/>
            <person name="Iadanoto S."/>
            <person name="Bubb K."/>
            <person name="Simms E."/>
            <person name="Levy R."/>
            <person name="Clendenning J."/>
            <person name="Kaul R."/>
            <person name="Kent W.J."/>
            <person name="Furey T.S."/>
            <person name="Baertsch R.A."/>
            <person name="Brent M.R."/>
            <person name="Keibler E."/>
            <person name="Flicek P."/>
            <person name="Bork P."/>
            <person name="Suyama M."/>
            <person name="Bailey J.A."/>
            <person name="Portnoy M.E."/>
            <person name="Torrents D."/>
            <person name="Chinwalla A.T."/>
            <person name="Gish W.R."/>
            <person name="Eddy S.R."/>
            <person name="McPherson J.D."/>
            <person name="Olson M.V."/>
            <person name="Eichler E.E."/>
            <person name="Green E.D."/>
            <person name="Waterston R.H."/>
            <person name="Wilson R.K."/>
        </authorList>
    </citation>
    <scope>NUCLEOTIDE SEQUENCE [LARGE SCALE GENOMIC DNA]</scope>
</reference>
<reference key="2">
    <citation type="journal article" date="2005" name="Genetics">
        <title>Lineage-specific loss of function of bitter taste receptor genes in humans and nonhuman primates.</title>
        <authorList>
            <person name="Go Y."/>
            <person name="Satta Y."/>
            <person name="Takenaka O."/>
            <person name="Takahata N."/>
        </authorList>
    </citation>
    <scope>NUCLEOTIDE SEQUENCE [GENOMIC DNA] OF 32-277</scope>
    <scope>POLYMORPHISM</scope>
</reference>
<reference key="3">
    <citation type="journal article" date="2017" name="Mol. Biol. Evol.">
        <title>Probing the Evolutionary History of Human Bitter Taste Receptor Pseudogenes by Restoring Their Function.</title>
        <authorList>
            <person name="Risso D."/>
            <person name="Behrens M."/>
            <person name="Sainz E."/>
            <person name="Meyerhof W."/>
            <person name="Drayna D."/>
        </authorList>
    </citation>
    <scope>SUBCELLULAR LOCATION</scope>
    <scope>FUNCTION</scope>
</reference>
<reference key="4">
    <citation type="journal article" date="2023" name="Mol. Nutr. Food Res.">
        <title>Activation Profile of TAS2R2, the 26th Human Bitter Taste Receptor.</title>
        <authorList>
            <person name="Lang T."/>
            <person name="Di Pizio A."/>
            <person name="Risso D."/>
            <person name="Drayna D."/>
            <person name="Behrens M."/>
        </authorList>
    </citation>
    <scope>FUNCTION</scope>
</reference>
<feature type="chain" id="PRO_0000461056" description="Taste receptor type 2 member 2">
    <location>
        <begin position="1"/>
        <end position="303"/>
    </location>
</feature>
<feature type="topological domain" description="Extracellular" evidence="6">
    <location>
        <begin position="1"/>
        <end position="10"/>
    </location>
</feature>
<feature type="transmembrane region" description="Helical" evidence="1">
    <location>
        <begin position="11"/>
        <end position="31"/>
    </location>
</feature>
<feature type="topological domain" description="Cytoplasmic" evidence="6">
    <location>
        <begin position="32"/>
        <end position="56"/>
    </location>
</feature>
<feature type="transmembrane region" description="Helical" evidence="1">
    <location>
        <begin position="57"/>
        <end position="77"/>
    </location>
</feature>
<feature type="topological domain" description="Extracellular" evidence="6">
    <location>
        <begin position="78"/>
        <end position="79"/>
    </location>
</feature>
<feature type="transmembrane region" description="Helical" evidence="1">
    <location>
        <begin position="80"/>
        <end position="100"/>
    </location>
</feature>
<feature type="topological domain" description="Cytoplasmic" evidence="6">
    <location>
        <begin position="101"/>
        <end position="102"/>
    </location>
</feature>
<feature type="transmembrane region" description="Helical" evidence="1">
    <location>
        <begin position="103"/>
        <end position="123"/>
    </location>
</feature>
<feature type="topological domain" description="Extracellular" evidence="6">
    <location>
        <begin position="124"/>
        <end position="129"/>
    </location>
</feature>
<feature type="transmembrane region" description="Helical" evidence="1">
    <location>
        <begin position="130"/>
        <end position="150"/>
    </location>
</feature>
<feature type="topological domain" description="Cytoplasmic" evidence="6">
    <location>
        <begin position="151"/>
        <end position="185"/>
    </location>
</feature>
<feature type="transmembrane region" description="Helical" evidence="1">
    <location>
        <begin position="186"/>
        <end position="206"/>
    </location>
</feature>
<feature type="topological domain" description="Extracellular" evidence="6">
    <location>
        <begin position="207"/>
        <end position="234"/>
    </location>
</feature>
<feature type="transmembrane region" description="Helical" evidence="1">
    <location>
        <begin position="235"/>
        <end position="255"/>
    </location>
</feature>
<feature type="topological domain" description="Cytoplasmic" evidence="6">
    <location>
        <begin position="256"/>
        <end position="277"/>
    </location>
</feature>
<sequence length="303" mass="34801">MALSFSAILHIIMMSAEFFTGITVNGFLIIVNCNELIKHRKLMPIQILLMCIGMSRFGLQMVLMVQSFFSVFFPLLYVKIIYGAAMMFLWMFFSSISLWFATCLSVFYCLKISGFTQSCFLWLKFRIPKLIPWLLLGSVLASVSIASVCIEVDYAKNVEEDALRNTTLKKSKTKIKKISEVLLVNLALIFPLAIFVMCTSMLLISLYKHTHRMQHGSHGFRNANTEAHINALKTVITFFCFFISYFAAFMTNMTFSLPYRSHQFFMLKDIMAAYPSGHSVIIILSNSKFQQSFRRILCLKKKL</sequence>
<dbReference type="EMBL" id="AC013470">
    <property type="status" value="NOT_ANNOTATED_CDS"/>
    <property type="molecule type" value="Genomic_DNA"/>
</dbReference>
<dbReference type="EMBL" id="AB198992">
    <property type="protein sequence ID" value="BAD97898.1"/>
    <property type="molecule type" value="Genomic_DNA"/>
</dbReference>
<dbReference type="EMBL" id="AB198994">
    <property type="protein sequence ID" value="BAD97899.1"/>
    <property type="molecule type" value="Genomic_DNA"/>
</dbReference>
<dbReference type="SMR" id="Q50KZ9"/>
<dbReference type="AGR" id="HGNC:20615"/>
<dbReference type="GeneCards" id="TAS2R2"/>
<dbReference type="HGNC" id="HGNC:20615">
    <property type="gene designation" value="TAS2R2"/>
</dbReference>
<dbReference type="Proteomes" id="UP000005640">
    <property type="component" value="Unplaced"/>
</dbReference>
<dbReference type="GO" id="GO:0005886">
    <property type="term" value="C:plasma membrane"/>
    <property type="evidence" value="ECO:0000314"/>
    <property type="project" value="UniProtKB"/>
</dbReference>
<dbReference type="GO" id="GO:0033038">
    <property type="term" value="F:bitter taste receptor activity"/>
    <property type="evidence" value="ECO:0000314"/>
    <property type="project" value="UniProtKB"/>
</dbReference>
<dbReference type="GO" id="GO:0004930">
    <property type="term" value="F:G protein-coupled receptor activity"/>
    <property type="evidence" value="ECO:0007669"/>
    <property type="project" value="UniProtKB-KW"/>
</dbReference>
<dbReference type="FunFam" id="1.20.1070.10:FF:000055">
    <property type="entry name" value="Taste receptor type 2"/>
    <property type="match status" value="1"/>
</dbReference>
<dbReference type="Gene3D" id="1.20.1070.10">
    <property type="entry name" value="Rhodopsin 7-helix transmembrane proteins"/>
    <property type="match status" value="1"/>
</dbReference>
<dbReference type="InterPro" id="IPR007960">
    <property type="entry name" value="TAS2R"/>
</dbReference>
<dbReference type="PANTHER" id="PTHR11394">
    <property type="entry name" value="TASTE RECEPTOR TYPE 2"/>
    <property type="match status" value="1"/>
</dbReference>
<dbReference type="PANTHER" id="PTHR11394:SF57">
    <property type="entry name" value="TASTE RECEPTOR TYPE 2"/>
    <property type="match status" value="1"/>
</dbReference>
<dbReference type="Pfam" id="PF05296">
    <property type="entry name" value="TAS2R"/>
    <property type="match status" value="1"/>
</dbReference>
<dbReference type="SUPFAM" id="SSF81321">
    <property type="entry name" value="Family A G protein-coupled receptor-like"/>
    <property type="match status" value="1"/>
</dbReference>
<protein>
    <recommendedName>
        <fullName evidence="5">Taste receptor type 2 member 2</fullName>
    </recommendedName>
    <alternativeName>
        <fullName evidence="5">Bitter taste receptor T2R2</fullName>
    </alternativeName>
</protein>
<keyword id="KW-1003">Cell membrane</keyword>
<keyword id="KW-0297">G-protein coupled receptor</keyword>
<keyword id="KW-0472">Membrane</keyword>
<keyword id="KW-0675">Receptor</keyword>
<keyword id="KW-1185">Reference proteome</keyword>
<keyword id="KW-0716">Sensory transduction</keyword>
<keyword id="KW-0919">Taste</keyword>
<keyword id="KW-0807">Transducer</keyword>
<keyword id="KW-0812">Transmembrane</keyword>
<keyword id="KW-1133">Transmembrane helix</keyword>
<organism>
    <name type="scientific">Homo sapiens</name>
    <name type="common">Human</name>
    <dbReference type="NCBI Taxonomy" id="9606"/>
    <lineage>
        <taxon>Eukaryota</taxon>
        <taxon>Metazoa</taxon>
        <taxon>Chordata</taxon>
        <taxon>Craniata</taxon>
        <taxon>Vertebrata</taxon>
        <taxon>Euteleostomi</taxon>
        <taxon>Mammalia</taxon>
        <taxon>Eutheria</taxon>
        <taxon>Euarchontoglires</taxon>
        <taxon>Primates</taxon>
        <taxon>Haplorrhini</taxon>
        <taxon>Catarrhini</taxon>
        <taxon>Hominidae</taxon>
        <taxon>Homo</taxon>
    </lineage>
</organism>
<gene>
    <name evidence="7" type="primary">TAS2R2</name>
    <name evidence="5" type="synonym">T2R2</name>
    <name evidence="7" type="synonym">TAS2R2P</name>
</gene>
<accession>Q50KZ9</accession>